<protein>
    <recommendedName>
        <fullName evidence="1">DNA replication and repair protein RecF</fullName>
    </recommendedName>
</protein>
<reference key="1">
    <citation type="journal article" date="2009" name="Genome Res.">
        <title>Newly introduced genomic prophage islands are critical determinants of in vivo competitiveness in the Liverpool epidemic strain of Pseudomonas aeruginosa.</title>
        <authorList>
            <person name="Winstanley C."/>
            <person name="Langille M.G.I."/>
            <person name="Fothergill J.L."/>
            <person name="Kukavica-Ibrulj I."/>
            <person name="Paradis-Bleau C."/>
            <person name="Sanschagrin F."/>
            <person name="Thomson N.R."/>
            <person name="Winsor G.L."/>
            <person name="Quail M.A."/>
            <person name="Lennard N."/>
            <person name="Bignell A."/>
            <person name="Clarke L."/>
            <person name="Seeger K."/>
            <person name="Saunders D."/>
            <person name="Harris D."/>
            <person name="Parkhill J."/>
            <person name="Hancock R.E.W."/>
            <person name="Brinkman F.S.L."/>
            <person name="Levesque R.C."/>
        </authorList>
    </citation>
    <scope>NUCLEOTIDE SEQUENCE [LARGE SCALE GENOMIC DNA]</scope>
    <source>
        <strain>LESB58</strain>
    </source>
</reference>
<proteinExistence type="inferred from homology"/>
<keyword id="KW-0067">ATP-binding</keyword>
<keyword id="KW-0963">Cytoplasm</keyword>
<keyword id="KW-0227">DNA damage</keyword>
<keyword id="KW-0234">DNA repair</keyword>
<keyword id="KW-0235">DNA replication</keyword>
<keyword id="KW-0238">DNA-binding</keyword>
<keyword id="KW-0547">Nucleotide-binding</keyword>
<keyword id="KW-0742">SOS response</keyword>
<comment type="function">
    <text evidence="1">The RecF protein is involved in DNA metabolism; it is required for DNA replication and normal SOS inducibility. RecF binds preferentially to single-stranded, linear DNA. It also seems to bind ATP.</text>
</comment>
<comment type="subcellular location">
    <subcellularLocation>
        <location evidence="1">Cytoplasm</location>
    </subcellularLocation>
</comment>
<comment type="similarity">
    <text evidence="1">Belongs to the RecF family.</text>
</comment>
<name>RECF_PSEA8</name>
<sequence length="369" mass="41475">MSLTRVSVTAVRNLHPVTLSPSPRINILYGDNGSGKTSVLEAIHLLGLARSFRSARLQPVIQYEEAACTVFGQVMLANGIASNLGISRERQGEFTIRIDGQNARSAAQLAETLPLQLINPDSFRLLEGAPKIRRQFLDWGVFHVEPRFLPVWQRLQKALRQRNSWLRHGKLDPASQAAWDRELSLASDEIDAYRRSYIQALKPVFEETLAELVSLDDLTLSYYRGWDKDRDLLEVLASSLLRDQQMGHTQAGPQRADLRIRLSGHNAAEILSRGQQKLVVCALRIAQGHLINRAKRGQCVYLVDDLPSELDEQHRMALCRLLEDLGCQVFITCVDPQLLKDGWRTDTPVSMFHVEHGKVSQTTTIGSEA</sequence>
<accession>B7V0N8</accession>
<feature type="chain" id="PRO_1000121140" description="DNA replication and repair protein RecF">
    <location>
        <begin position="1"/>
        <end position="369"/>
    </location>
</feature>
<feature type="binding site" evidence="1">
    <location>
        <begin position="30"/>
        <end position="37"/>
    </location>
    <ligand>
        <name>ATP</name>
        <dbReference type="ChEBI" id="CHEBI:30616"/>
    </ligand>
</feature>
<dbReference type="EMBL" id="FM209186">
    <property type="protein sequence ID" value="CAW24730.1"/>
    <property type="molecule type" value="Genomic_DNA"/>
</dbReference>
<dbReference type="SMR" id="B7V0N8"/>
<dbReference type="KEGG" id="pag:PLES_00021"/>
<dbReference type="HOGENOM" id="CLU_040267_0_0_6"/>
<dbReference type="GO" id="GO:0005737">
    <property type="term" value="C:cytoplasm"/>
    <property type="evidence" value="ECO:0007669"/>
    <property type="project" value="UniProtKB-SubCell"/>
</dbReference>
<dbReference type="GO" id="GO:0005524">
    <property type="term" value="F:ATP binding"/>
    <property type="evidence" value="ECO:0007669"/>
    <property type="project" value="UniProtKB-UniRule"/>
</dbReference>
<dbReference type="GO" id="GO:0003697">
    <property type="term" value="F:single-stranded DNA binding"/>
    <property type="evidence" value="ECO:0007669"/>
    <property type="project" value="UniProtKB-UniRule"/>
</dbReference>
<dbReference type="GO" id="GO:0006260">
    <property type="term" value="P:DNA replication"/>
    <property type="evidence" value="ECO:0007669"/>
    <property type="project" value="UniProtKB-UniRule"/>
</dbReference>
<dbReference type="GO" id="GO:0000731">
    <property type="term" value="P:DNA synthesis involved in DNA repair"/>
    <property type="evidence" value="ECO:0007669"/>
    <property type="project" value="TreeGrafter"/>
</dbReference>
<dbReference type="GO" id="GO:0006302">
    <property type="term" value="P:double-strand break repair"/>
    <property type="evidence" value="ECO:0007669"/>
    <property type="project" value="TreeGrafter"/>
</dbReference>
<dbReference type="GO" id="GO:0009432">
    <property type="term" value="P:SOS response"/>
    <property type="evidence" value="ECO:0007669"/>
    <property type="project" value="UniProtKB-UniRule"/>
</dbReference>
<dbReference type="Gene3D" id="3.40.50.300">
    <property type="entry name" value="P-loop containing nucleotide triphosphate hydrolases"/>
    <property type="match status" value="1"/>
</dbReference>
<dbReference type="Gene3D" id="1.20.1050.90">
    <property type="entry name" value="RecF/RecN/SMC, N-terminal domain"/>
    <property type="match status" value="1"/>
</dbReference>
<dbReference type="HAMAP" id="MF_00365">
    <property type="entry name" value="RecF"/>
    <property type="match status" value="1"/>
</dbReference>
<dbReference type="InterPro" id="IPR001238">
    <property type="entry name" value="DNA-binding_RecF"/>
</dbReference>
<dbReference type="InterPro" id="IPR018078">
    <property type="entry name" value="DNA-binding_RecF_CS"/>
</dbReference>
<dbReference type="InterPro" id="IPR027417">
    <property type="entry name" value="P-loop_NTPase"/>
</dbReference>
<dbReference type="InterPro" id="IPR003395">
    <property type="entry name" value="RecF/RecN/SMC_N"/>
</dbReference>
<dbReference type="InterPro" id="IPR042174">
    <property type="entry name" value="RecF_2"/>
</dbReference>
<dbReference type="NCBIfam" id="TIGR00611">
    <property type="entry name" value="recf"/>
    <property type="match status" value="1"/>
</dbReference>
<dbReference type="PANTHER" id="PTHR32182">
    <property type="entry name" value="DNA REPLICATION AND REPAIR PROTEIN RECF"/>
    <property type="match status" value="1"/>
</dbReference>
<dbReference type="PANTHER" id="PTHR32182:SF0">
    <property type="entry name" value="DNA REPLICATION AND REPAIR PROTEIN RECF"/>
    <property type="match status" value="1"/>
</dbReference>
<dbReference type="Pfam" id="PF02463">
    <property type="entry name" value="SMC_N"/>
    <property type="match status" value="1"/>
</dbReference>
<dbReference type="SUPFAM" id="SSF52540">
    <property type="entry name" value="P-loop containing nucleoside triphosphate hydrolases"/>
    <property type="match status" value="1"/>
</dbReference>
<dbReference type="PROSITE" id="PS00617">
    <property type="entry name" value="RECF_1"/>
    <property type="match status" value="1"/>
</dbReference>
<dbReference type="PROSITE" id="PS00618">
    <property type="entry name" value="RECF_2"/>
    <property type="match status" value="1"/>
</dbReference>
<evidence type="ECO:0000255" key="1">
    <source>
        <dbReference type="HAMAP-Rule" id="MF_00365"/>
    </source>
</evidence>
<organism>
    <name type="scientific">Pseudomonas aeruginosa (strain LESB58)</name>
    <dbReference type="NCBI Taxonomy" id="557722"/>
    <lineage>
        <taxon>Bacteria</taxon>
        <taxon>Pseudomonadati</taxon>
        <taxon>Pseudomonadota</taxon>
        <taxon>Gammaproteobacteria</taxon>
        <taxon>Pseudomonadales</taxon>
        <taxon>Pseudomonadaceae</taxon>
        <taxon>Pseudomonas</taxon>
    </lineage>
</organism>
<gene>
    <name evidence="1" type="primary">recF</name>
    <name type="ordered locus">PLES_00021</name>
</gene>